<comment type="function">
    <text evidence="1">Regulates arginine biosynthesis genes.</text>
</comment>
<comment type="pathway">
    <text>Amino-acid biosynthesis; L-arginine biosynthesis [regulation].</text>
</comment>
<comment type="subcellular location">
    <subcellularLocation>
        <location evidence="1">Cytoplasm</location>
    </subcellularLocation>
</comment>
<comment type="similarity">
    <text evidence="2">Belongs to the ArgR family.</text>
</comment>
<comment type="sequence caution" evidence="2">
    <conflict type="erroneous initiation">
        <sequence resource="EMBL-CDS" id="AAK02633"/>
    </conflict>
</comment>
<evidence type="ECO:0000250" key="1"/>
<evidence type="ECO:0000305" key="2"/>
<proteinExistence type="inferred from homology"/>
<accession>P57850</accession>
<gene>
    <name type="primary">argR</name>
    <name type="ordered locus">PM0549</name>
</gene>
<sequence>MNYEKQDNLLNAFKELLAQERFGSQSEIVQALQELGFTQINQSKVSRMLTKFGAVRTRNTRMEMVYCLPNELSVPNTKSPLKNLVLDIDHNHFVVVIRTTPGAAQLIARLLDSIGKADGILGTIAGDDTIFVTPTLDANIADLIKSIRNLFETSI</sequence>
<protein>
    <recommendedName>
        <fullName>Arginine repressor</fullName>
    </recommendedName>
</protein>
<dbReference type="EMBL" id="AE004439">
    <property type="protein sequence ID" value="AAK02633.1"/>
    <property type="status" value="ALT_INIT"/>
    <property type="molecule type" value="Genomic_DNA"/>
</dbReference>
<dbReference type="RefSeq" id="WP_005756453.1">
    <property type="nucleotide sequence ID" value="NC_002663.1"/>
</dbReference>
<dbReference type="SMR" id="P57850"/>
<dbReference type="STRING" id="272843.PM0549"/>
<dbReference type="EnsemblBacteria" id="AAK02633">
    <property type="protein sequence ID" value="AAK02633"/>
    <property type="gene ID" value="PM0549"/>
</dbReference>
<dbReference type="GeneID" id="77208102"/>
<dbReference type="KEGG" id="pmu:PM0549"/>
<dbReference type="PATRIC" id="fig|272843.6.peg.556"/>
<dbReference type="HOGENOM" id="CLU_097103_2_0_6"/>
<dbReference type="OrthoDB" id="7060358at2"/>
<dbReference type="UniPathway" id="UPA00068"/>
<dbReference type="Proteomes" id="UP000000809">
    <property type="component" value="Chromosome"/>
</dbReference>
<dbReference type="GO" id="GO:0005737">
    <property type="term" value="C:cytoplasm"/>
    <property type="evidence" value="ECO:0007669"/>
    <property type="project" value="UniProtKB-SubCell"/>
</dbReference>
<dbReference type="GO" id="GO:0034618">
    <property type="term" value="F:arginine binding"/>
    <property type="evidence" value="ECO:0007669"/>
    <property type="project" value="InterPro"/>
</dbReference>
<dbReference type="GO" id="GO:0003677">
    <property type="term" value="F:DNA binding"/>
    <property type="evidence" value="ECO:0007669"/>
    <property type="project" value="UniProtKB-KW"/>
</dbReference>
<dbReference type="GO" id="GO:0003700">
    <property type="term" value="F:DNA-binding transcription factor activity"/>
    <property type="evidence" value="ECO:0007669"/>
    <property type="project" value="UniProtKB-UniRule"/>
</dbReference>
<dbReference type="GO" id="GO:0006526">
    <property type="term" value="P:L-arginine biosynthetic process"/>
    <property type="evidence" value="ECO:0007669"/>
    <property type="project" value="UniProtKB-UniPathway"/>
</dbReference>
<dbReference type="GO" id="GO:0051259">
    <property type="term" value="P:protein complex oligomerization"/>
    <property type="evidence" value="ECO:0007669"/>
    <property type="project" value="InterPro"/>
</dbReference>
<dbReference type="GO" id="GO:1900079">
    <property type="term" value="P:regulation of arginine biosynthetic process"/>
    <property type="evidence" value="ECO:0007669"/>
    <property type="project" value="UniProtKB-UniRule"/>
</dbReference>
<dbReference type="Gene3D" id="3.30.1360.40">
    <property type="match status" value="1"/>
</dbReference>
<dbReference type="Gene3D" id="1.10.10.10">
    <property type="entry name" value="Winged helix-like DNA-binding domain superfamily/Winged helix DNA-binding domain"/>
    <property type="match status" value="1"/>
</dbReference>
<dbReference type="HAMAP" id="MF_00173">
    <property type="entry name" value="Arg_repressor"/>
    <property type="match status" value="1"/>
</dbReference>
<dbReference type="InterPro" id="IPR001669">
    <property type="entry name" value="Arg_repress"/>
</dbReference>
<dbReference type="InterPro" id="IPR020899">
    <property type="entry name" value="Arg_repress_C"/>
</dbReference>
<dbReference type="InterPro" id="IPR036251">
    <property type="entry name" value="Arg_repress_C_sf"/>
</dbReference>
<dbReference type="InterPro" id="IPR020900">
    <property type="entry name" value="Arg_repress_DNA-bd"/>
</dbReference>
<dbReference type="InterPro" id="IPR036388">
    <property type="entry name" value="WH-like_DNA-bd_sf"/>
</dbReference>
<dbReference type="InterPro" id="IPR036390">
    <property type="entry name" value="WH_DNA-bd_sf"/>
</dbReference>
<dbReference type="NCBIfam" id="TIGR01529">
    <property type="entry name" value="argR_whole"/>
    <property type="match status" value="1"/>
</dbReference>
<dbReference type="NCBIfam" id="NF003457">
    <property type="entry name" value="PRK05066.1"/>
    <property type="match status" value="1"/>
</dbReference>
<dbReference type="PANTHER" id="PTHR34471">
    <property type="entry name" value="ARGININE REPRESSOR"/>
    <property type="match status" value="1"/>
</dbReference>
<dbReference type="PANTHER" id="PTHR34471:SF1">
    <property type="entry name" value="ARGININE REPRESSOR"/>
    <property type="match status" value="1"/>
</dbReference>
<dbReference type="Pfam" id="PF01316">
    <property type="entry name" value="Arg_repressor"/>
    <property type="match status" value="1"/>
</dbReference>
<dbReference type="Pfam" id="PF02863">
    <property type="entry name" value="Arg_repressor_C"/>
    <property type="match status" value="1"/>
</dbReference>
<dbReference type="PRINTS" id="PR01467">
    <property type="entry name" value="ARGREPRESSOR"/>
</dbReference>
<dbReference type="SUPFAM" id="SSF55252">
    <property type="entry name" value="C-terminal domain of arginine repressor"/>
    <property type="match status" value="1"/>
</dbReference>
<dbReference type="SUPFAM" id="SSF46785">
    <property type="entry name" value="Winged helix' DNA-binding domain"/>
    <property type="match status" value="1"/>
</dbReference>
<keyword id="KW-0028">Amino-acid biosynthesis</keyword>
<keyword id="KW-0055">Arginine biosynthesis</keyword>
<keyword id="KW-0963">Cytoplasm</keyword>
<keyword id="KW-0238">DNA-binding</keyword>
<keyword id="KW-1185">Reference proteome</keyword>
<keyword id="KW-0678">Repressor</keyword>
<keyword id="KW-0804">Transcription</keyword>
<keyword id="KW-0805">Transcription regulation</keyword>
<organism>
    <name type="scientific">Pasteurella multocida (strain Pm70)</name>
    <dbReference type="NCBI Taxonomy" id="272843"/>
    <lineage>
        <taxon>Bacteria</taxon>
        <taxon>Pseudomonadati</taxon>
        <taxon>Pseudomonadota</taxon>
        <taxon>Gammaproteobacteria</taxon>
        <taxon>Pasteurellales</taxon>
        <taxon>Pasteurellaceae</taxon>
        <taxon>Pasteurella</taxon>
    </lineage>
</organism>
<feature type="chain" id="PRO_0000205107" description="Arginine repressor">
    <location>
        <begin position="1"/>
        <end position="155"/>
    </location>
</feature>
<reference key="1">
    <citation type="journal article" date="2001" name="Proc. Natl. Acad. Sci. U.S.A.">
        <title>Complete genomic sequence of Pasteurella multocida Pm70.</title>
        <authorList>
            <person name="May B.J."/>
            <person name="Zhang Q."/>
            <person name="Li L.L."/>
            <person name="Paustian M.L."/>
            <person name="Whittam T.S."/>
            <person name="Kapur V."/>
        </authorList>
    </citation>
    <scope>NUCLEOTIDE SEQUENCE [LARGE SCALE GENOMIC DNA]</scope>
    <source>
        <strain>Pm70</strain>
    </source>
</reference>
<name>ARGR_PASMU</name>